<protein>
    <recommendedName>
        <fullName evidence="1">Acetyl-coenzyme A carboxylase carboxyl transferase subunit beta</fullName>
        <shortName evidence="1">ACCase subunit beta</shortName>
        <shortName evidence="1">Acetyl-CoA carboxylase carboxyltransferase subunit beta</shortName>
        <ecNumber evidence="1">2.1.3.15</ecNumber>
    </recommendedName>
</protein>
<reference key="1">
    <citation type="journal article" date="2008" name="Proc. Natl. Acad. Sci. U.S.A.">
        <title>The genome of Cyanothece 51142, a unicellular diazotrophic cyanobacterium important in the marine nitrogen cycle.</title>
        <authorList>
            <person name="Welsh E.A."/>
            <person name="Liberton M."/>
            <person name="Stoeckel J."/>
            <person name="Loh T."/>
            <person name="Elvitigala T."/>
            <person name="Wang C."/>
            <person name="Wollam A."/>
            <person name="Fulton R.S."/>
            <person name="Clifton S.W."/>
            <person name="Jacobs J.M."/>
            <person name="Aurora R."/>
            <person name="Ghosh B.K."/>
            <person name="Sherman L.A."/>
            <person name="Smith R.D."/>
            <person name="Wilson R.K."/>
            <person name="Pakrasi H.B."/>
        </authorList>
    </citation>
    <scope>NUCLEOTIDE SEQUENCE [LARGE SCALE GENOMIC DNA]</scope>
    <source>
        <strain>ATCC 51142 / BH68</strain>
    </source>
</reference>
<organism>
    <name type="scientific">Crocosphaera subtropica (strain ATCC 51142 / BH68)</name>
    <name type="common">Cyanothece sp. (strain ATCC 51142)</name>
    <dbReference type="NCBI Taxonomy" id="43989"/>
    <lineage>
        <taxon>Bacteria</taxon>
        <taxon>Bacillati</taxon>
        <taxon>Cyanobacteriota</taxon>
        <taxon>Cyanophyceae</taxon>
        <taxon>Oscillatoriophycideae</taxon>
        <taxon>Chroococcales</taxon>
        <taxon>Aphanothecaceae</taxon>
        <taxon>Crocosphaera</taxon>
        <taxon>Crocosphaera subtropica</taxon>
    </lineage>
</organism>
<proteinExistence type="inferred from homology"/>
<keyword id="KW-0067">ATP-binding</keyword>
<keyword id="KW-0963">Cytoplasm</keyword>
<keyword id="KW-0275">Fatty acid biosynthesis</keyword>
<keyword id="KW-0276">Fatty acid metabolism</keyword>
<keyword id="KW-0444">Lipid biosynthesis</keyword>
<keyword id="KW-0443">Lipid metabolism</keyword>
<keyword id="KW-0479">Metal-binding</keyword>
<keyword id="KW-0547">Nucleotide-binding</keyword>
<keyword id="KW-1185">Reference proteome</keyword>
<keyword id="KW-0808">Transferase</keyword>
<keyword id="KW-0862">Zinc</keyword>
<keyword id="KW-0863">Zinc-finger</keyword>
<accession>B1WNK3</accession>
<gene>
    <name evidence="1" type="primary">accD</name>
    <name type="ordered locus">cce_2082</name>
</gene>
<name>ACCD_CROS5</name>
<comment type="function">
    <text evidence="1">Component of the acetyl coenzyme A carboxylase (ACC) complex. Biotin carboxylase (BC) catalyzes the carboxylation of biotin on its carrier protein (BCCP) and then the CO(2) group is transferred by the transcarboxylase to acetyl-CoA to form malonyl-CoA.</text>
</comment>
<comment type="catalytic activity">
    <reaction evidence="1">
        <text>N(6)-carboxybiotinyl-L-lysyl-[protein] + acetyl-CoA = N(6)-biotinyl-L-lysyl-[protein] + malonyl-CoA</text>
        <dbReference type="Rhea" id="RHEA:54728"/>
        <dbReference type="Rhea" id="RHEA-COMP:10505"/>
        <dbReference type="Rhea" id="RHEA-COMP:10506"/>
        <dbReference type="ChEBI" id="CHEBI:57288"/>
        <dbReference type="ChEBI" id="CHEBI:57384"/>
        <dbReference type="ChEBI" id="CHEBI:83144"/>
        <dbReference type="ChEBI" id="CHEBI:83145"/>
        <dbReference type="EC" id="2.1.3.15"/>
    </reaction>
</comment>
<comment type="cofactor">
    <cofactor evidence="1">
        <name>Zn(2+)</name>
        <dbReference type="ChEBI" id="CHEBI:29105"/>
    </cofactor>
    <text evidence="1">Binds 1 zinc ion per subunit.</text>
</comment>
<comment type="pathway">
    <text evidence="1">Lipid metabolism; malonyl-CoA biosynthesis; malonyl-CoA from acetyl-CoA: step 1/1.</text>
</comment>
<comment type="subunit">
    <text evidence="1">Acetyl-CoA carboxylase is a heterohexamer composed of biotin carboxyl carrier protein (AccB), biotin carboxylase (AccC) and two subunits each of ACCase subunit alpha (AccA) and ACCase subunit beta (AccD).</text>
</comment>
<comment type="subcellular location">
    <subcellularLocation>
        <location evidence="1">Cytoplasm</location>
    </subcellularLocation>
</comment>
<comment type="similarity">
    <text evidence="1">Belongs to the AccD/PCCB family.</text>
</comment>
<dbReference type="EC" id="2.1.3.15" evidence="1"/>
<dbReference type="EMBL" id="CP000806">
    <property type="protein sequence ID" value="ACB51432.1"/>
    <property type="molecule type" value="Genomic_DNA"/>
</dbReference>
<dbReference type="RefSeq" id="WP_009545881.1">
    <property type="nucleotide sequence ID" value="NC_010546.1"/>
</dbReference>
<dbReference type="SMR" id="B1WNK3"/>
<dbReference type="STRING" id="43989.cce_2082"/>
<dbReference type="KEGG" id="cyt:cce_2082"/>
<dbReference type="eggNOG" id="COG0777">
    <property type="taxonomic scope" value="Bacteria"/>
</dbReference>
<dbReference type="HOGENOM" id="CLU_015486_1_1_3"/>
<dbReference type="OrthoDB" id="9772975at2"/>
<dbReference type="UniPathway" id="UPA00655">
    <property type="reaction ID" value="UER00711"/>
</dbReference>
<dbReference type="Proteomes" id="UP000001203">
    <property type="component" value="Chromosome circular"/>
</dbReference>
<dbReference type="GO" id="GO:0009317">
    <property type="term" value="C:acetyl-CoA carboxylase complex"/>
    <property type="evidence" value="ECO:0007669"/>
    <property type="project" value="InterPro"/>
</dbReference>
<dbReference type="GO" id="GO:0003989">
    <property type="term" value="F:acetyl-CoA carboxylase activity"/>
    <property type="evidence" value="ECO:0007669"/>
    <property type="project" value="InterPro"/>
</dbReference>
<dbReference type="GO" id="GO:0005524">
    <property type="term" value="F:ATP binding"/>
    <property type="evidence" value="ECO:0007669"/>
    <property type="project" value="UniProtKB-KW"/>
</dbReference>
<dbReference type="GO" id="GO:0016743">
    <property type="term" value="F:carboxyl- or carbamoyltransferase activity"/>
    <property type="evidence" value="ECO:0007669"/>
    <property type="project" value="UniProtKB-UniRule"/>
</dbReference>
<dbReference type="GO" id="GO:0008270">
    <property type="term" value="F:zinc ion binding"/>
    <property type="evidence" value="ECO:0007669"/>
    <property type="project" value="UniProtKB-UniRule"/>
</dbReference>
<dbReference type="GO" id="GO:0006633">
    <property type="term" value="P:fatty acid biosynthetic process"/>
    <property type="evidence" value="ECO:0007669"/>
    <property type="project" value="UniProtKB-KW"/>
</dbReference>
<dbReference type="GO" id="GO:2001295">
    <property type="term" value="P:malonyl-CoA biosynthetic process"/>
    <property type="evidence" value="ECO:0007669"/>
    <property type="project" value="UniProtKB-UniRule"/>
</dbReference>
<dbReference type="Gene3D" id="3.90.226.10">
    <property type="entry name" value="2-enoyl-CoA Hydratase, Chain A, domain 1"/>
    <property type="match status" value="1"/>
</dbReference>
<dbReference type="HAMAP" id="MF_01395">
    <property type="entry name" value="AcetylCoA_CT_beta"/>
    <property type="match status" value="1"/>
</dbReference>
<dbReference type="InterPro" id="IPR034733">
    <property type="entry name" value="AcCoA_carboxyl_beta"/>
</dbReference>
<dbReference type="InterPro" id="IPR000438">
    <property type="entry name" value="Acetyl_CoA_COase_Trfase_b_su"/>
</dbReference>
<dbReference type="InterPro" id="IPR029045">
    <property type="entry name" value="ClpP/crotonase-like_dom_sf"/>
</dbReference>
<dbReference type="InterPro" id="IPR011762">
    <property type="entry name" value="COA_CT_N"/>
</dbReference>
<dbReference type="InterPro" id="IPR041010">
    <property type="entry name" value="Znf-ACC"/>
</dbReference>
<dbReference type="NCBIfam" id="TIGR00515">
    <property type="entry name" value="accD"/>
    <property type="match status" value="1"/>
</dbReference>
<dbReference type="PANTHER" id="PTHR42995">
    <property type="entry name" value="ACETYL-COENZYME A CARBOXYLASE CARBOXYL TRANSFERASE SUBUNIT BETA, CHLOROPLASTIC"/>
    <property type="match status" value="1"/>
</dbReference>
<dbReference type="PANTHER" id="PTHR42995:SF5">
    <property type="entry name" value="ACETYL-COENZYME A CARBOXYLASE CARBOXYL TRANSFERASE SUBUNIT BETA, CHLOROPLASTIC"/>
    <property type="match status" value="1"/>
</dbReference>
<dbReference type="Pfam" id="PF01039">
    <property type="entry name" value="Carboxyl_trans"/>
    <property type="match status" value="1"/>
</dbReference>
<dbReference type="Pfam" id="PF17848">
    <property type="entry name" value="Zn_ribbon_ACC"/>
    <property type="match status" value="1"/>
</dbReference>
<dbReference type="PRINTS" id="PR01070">
    <property type="entry name" value="ACCCTRFRASEB"/>
</dbReference>
<dbReference type="SUPFAM" id="SSF52096">
    <property type="entry name" value="ClpP/crotonase"/>
    <property type="match status" value="1"/>
</dbReference>
<dbReference type="PROSITE" id="PS50980">
    <property type="entry name" value="COA_CT_NTER"/>
    <property type="match status" value="1"/>
</dbReference>
<feature type="chain" id="PRO_0000358979" description="Acetyl-coenzyme A carboxylase carboxyl transferase subunit beta">
    <location>
        <begin position="1"/>
        <end position="317"/>
    </location>
</feature>
<feature type="domain" description="CoA carboxyltransferase N-terminal" evidence="2">
    <location>
        <begin position="30"/>
        <end position="299"/>
    </location>
</feature>
<feature type="zinc finger region" description="C4-type" evidence="1">
    <location>
        <begin position="34"/>
        <end position="56"/>
    </location>
</feature>
<feature type="binding site" evidence="1">
    <location>
        <position position="34"/>
    </location>
    <ligand>
        <name>Zn(2+)</name>
        <dbReference type="ChEBI" id="CHEBI:29105"/>
    </ligand>
</feature>
<feature type="binding site" evidence="1">
    <location>
        <position position="37"/>
    </location>
    <ligand>
        <name>Zn(2+)</name>
        <dbReference type="ChEBI" id="CHEBI:29105"/>
    </ligand>
</feature>
<feature type="binding site" evidence="1">
    <location>
        <position position="53"/>
    </location>
    <ligand>
        <name>Zn(2+)</name>
        <dbReference type="ChEBI" id="CHEBI:29105"/>
    </ligand>
</feature>
<feature type="binding site" evidence="1">
    <location>
        <position position="56"/>
    </location>
    <ligand>
        <name>Zn(2+)</name>
        <dbReference type="ChEBI" id="CHEBI:29105"/>
    </ligand>
</feature>
<evidence type="ECO:0000255" key="1">
    <source>
        <dbReference type="HAMAP-Rule" id="MF_01395"/>
    </source>
</evidence>
<evidence type="ECO:0000255" key="2">
    <source>
        <dbReference type="PROSITE-ProRule" id="PRU01136"/>
    </source>
</evidence>
<sequence length="317" mass="35476">MSIFDWFAKQEKSEPPIQQQQKEREIADGLWTKCVACTALTYTKDLQANQLVCTECGHHFRVESSERIAQLMDKNTWKPLNDHLTPTDPLKFCDRKPYSDRIKDTQEKTGLVDAVQTGTGLIDGLPLALGVMDFRFMGGSMGSVVGEKLCRLIEYATQERLPVVIVCASGGARMQEGMLSLMQMAKISGALERHRNAKLLYIPVLTHPTTGGVTASFAMLGDLIIAEPNATIGFAGRRVIEQTLREKLPDGFQTSEYLLKHGFVDAIVSRTQLKKTLAQLISIHQPFFPVLPPLNVREKHHHHHSEEVVLKMDGKEE</sequence>